<proteinExistence type="inferred from homology"/>
<accession>A5GHS0</accession>
<protein>
    <recommendedName>
        <fullName evidence="1">Large ribosomal subunit protein bL35</fullName>
    </recommendedName>
    <alternativeName>
        <fullName evidence="2">50S ribosomal protein L35</fullName>
    </alternativeName>
</protein>
<sequence length="65" mass="7546">MPKLKTRKAAAKRFKATGTGKFLRRRAFRNHLLDHKSPKLKRHLATKAVVDRTDEDRVALMMPYA</sequence>
<feature type="chain" id="PRO_1000050781" description="Large ribosomal subunit protein bL35">
    <location>
        <begin position="1"/>
        <end position="65"/>
    </location>
</feature>
<comment type="similarity">
    <text evidence="1">Belongs to the bacterial ribosomal protein bL35 family.</text>
</comment>
<gene>
    <name evidence="1" type="primary">rpmI</name>
    <name evidence="1" type="synonym">rpl35</name>
    <name type="ordered locus">SynWH7803_0059</name>
</gene>
<keyword id="KW-1185">Reference proteome</keyword>
<keyword id="KW-0687">Ribonucleoprotein</keyword>
<keyword id="KW-0689">Ribosomal protein</keyword>
<organism>
    <name type="scientific">Synechococcus sp. (strain WH7803)</name>
    <dbReference type="NCBI Taxonomy" id="32051"/>
    <lineage>
        <taxon>Bacteria</taxon>
        <taxon>Bacillati</taxon>
        <taxon>Cyanobacteriota</taxon>
        <taxon>Cyanophyceae</taxon>
        <taxon>Synechococcales</taxon>
        <taxon>Synechococcaceae</taxon>
        <taxon>Synechococcus</taxon>
    </lineage>
</organism>
<name>RL35_SYNPW</name>
<dbReference type="EMBL" id="CT971583">
    <property type="protein sequence ID" value="CAK22485.1"/>
    <property type="molecule type" value="Genomic_DNA"/>
</dbReference>
<dbReference type="SMR" id="A5GHS0"/>
<dbReference type="STRING" id="32051.SynWH7803_0059"/>
<dbReference type="KEGG" id="syx:SynWH7803_0059"/>
<dbReference type="eggNOG" id="COG0291">
    <property type="taxonomic scope" value="Bacteria"/>
</dbReference>
<dbReference type="HOGENOM" id="CLU_169643_4_0_3"/>
<dbReference type="OrthoDB" id="47476at2"/>
<dbReference type="Proteomes" id="UP000001566">
    <property type="component" value="Chromosome"/>
</dbReference>
<dbReference type="GO" id="GO:0022625">
    <property type="term" value="C:cytosolic large ribosomal subunit"/>
    <property type="evidence" value="ECO:0007669"/>
    <property type="project" value="TreeGrafter"/>
</dbReference>
<dbReference type="GO" id="GO:0003735">
    <property type="term" value="F:structural constituent of ribosome"/>
    <property type="evidence" value="ECO:0007669"/>
    <property type="project" value="InterPro"/>
</dbReference>
<dbReference type="GO" id="GO:0006412">
    <property type="term" value="P:translation"/>
    <property type="evidence" value="ECO:0007669"/>
    <property type="project" value="UniProtKB-UniRule"/>
</dbReference>
<dbReference type="FunFam" id="4.10.410.60:FF:000001">
    <property type="entry name" value="50S ribosomal protein L35"/>
    <property type="match status" value="1"/>
</dbReference>
<dbReference type="Gene3D" id="4.10.410.60">
    <property type="match status" value="1"/>
</dbReference>
<dbReference type="HAMAP" id="MF_00514">
    <property type="entry name" value="Ribosomal_bL35"/>
    <property type="match status" value="1"/>
</dbReference>
<dbReference type="InterPro" id="IPR001706">
    <property type="entry name" value="Ribosomal_bL35"/>
</dbReference>
<dbReference type="InterPro" id="IPR021137">
    <property type="entry name" value="Ribosomal_bL35-like"/>
</dbReference>
<dbReference type="InterPro" id="IPR018265">
    <property type="entry name" value="Ribosomal_bL35_CS"/>
</dbReference>
<dbReference type="InterPro" id="IPR037229">
    <property type="entry name" value="Ribosomal_bL35_sf"/>
</dbReference>
<dbReference type="NCBIfam" id="TIGR00001">
    <property type="entry name" value="rpmI_bact"/>
    <property type="match status" value="1"/>
</dbReference>
<dbReference type="PANTHER" id="PTHR33343">
    <property type="entry name" value="54S RIBOSOMAL PROTEIN BL35M"/>
    <property type="match status" value="1"/>
</dbReference>
<dbReference type="PANTHER" id="PTHR33343:SF1">
    <property type="entry name" value="LARGE RIBOSOMAL SUBUNIT PROTEIN BL35M"/>
    <property type="match status" value="1"/>
</dbReference>
<dbReference type="Pfam" id="PF01632">
    <property type="entry name" value="Ribosomal_L35p"/>
    <property type="match status" value="1"/>
</dbReference>
<dbReference type="PRINTS" id="PR00064">
    <property type="entry name" value="RIBOSOMALL35"/>
</dbReference>
<dbReference type="SUPFAM" id="SSF143034">
    <property type="entry name" value="L35p-like"/>
    <property type="match status" value="1"/>
</dbReference>
<dbReference type="PROSITE" id="PS00936">
    <property type="entry name" value="RIBOSOMAL_L35"/>
    <property type="match status" value="1"/>
</dbReference>
<reference key="1">
    <citation type="submission" date="2006-05" db="EMBL/GenBank/DDBJ databases">
        <authorList>
            <consortium name="Genoscope"/>
        </authorList>
    </citation>
    <scope>NUCLEOTIDE SEQUENCE [LARGE SCALE GENOMIC DNA]</scope>
    <source>
        <strain>WH7803</strain>
    </source>
</reference>
<evidence type="ECO:0000255" key="1">
    <source>
        <dbReference type="HAMAP-Rule" id="MF_00514"/>
    </source>
</evidence>
<evidence type="ECO:0000305" key="2"/>